<feature type="chain" id="PRO_0000389967" description="NADH-quinone oxidoreductase subunit K">
    <location>
        <begin position="1"/>
        <end position="102"/>
    </location>
</feature>
<feature type="transmembrane region" description="Helical" evidence="1">
    <location>
        <begin position="5"/>
        <end position="25"/>
    </location>
</feature>
<feature type="transmembrane region" description="Helical" evidence="1">
    <location>
        <begin position="30"/>
        <end position="50"/>
    </location>
</feature>
<feature type="transmembrane region" description="Helical" evidence="1">
    <location>
        <begin position="62"/>
        <end position="82"/>
    </location>
</feature>
<reference key="1">
    <citation type="journal article" date="2007" name="Science">
        <title>Legumes symbioses: absence of nod genes in photosynthetic bradyrhizobia.</title>
        <authorList>
            <person name="Giraud E."/>
            <person name="Moulin L."/>
            <person name="Vallenet D."/>
            <person name="Barbe V."/>
            <person name="Cytryn E."/>
            <person name="Avarre J.-C."/>
            <person name="Jaubert M."/>
            <person name="Simon D."/>
            <person name="Cartieaux F."/>
            <person name="Prin Y."/>
            <person name="Bena G."/>
            <person name="Hannibal L."/>
            <person name="Fardoux J."/>
            <person name="Kojadinovic M."/>
            <person name="Vuillet L."/>
            <person name="Lajus A."/>
            <person name="Cruveiller S."/>
            <person name="Rouy Z."/>
            <person name="Mangenot S."/>
            <person name="Segurens B."/>
            <person name="Dossat C."/>
            <person name="Franck W.L."/>
            <person name="Chang W.-S."/>
            <person name="Saunders E."/>
            <person name="Bruce D."/>
            <person name="Richardson P."/>
            <person name="Normand P."/>
            <person name="Dreyfus B."/>
            <person name="Pignol D."/>
            <person name="Stacey G."/>
            <person name="Emerich D."/>
            <person name="Vermeglio A."/>
            <person name="Medigue C."/>
            <person name="Sadowsky M."/>
        </authorList>
    </citation>
    <scope>NUCLEOTIDE SEQUENCE [LARGE SCALE GENOMIC DNA]</scope>
    <source>
        <strain>BTAi1 / ATCC BAA-1182</strain>
    </source>
</reference>
<sequence length="102" mass="10817">MTIGLGHYLAVAAMLFTLGILGIFLNRKNIIVILMSVELILLAVNINLVAFSTFLGDIVGQVFALLVLTVAAAEAAIGLAVLVVYFRNRGSIAVEDVNLMKG</sequence>
<gene>
    <name evidence="1" type="primary">nuoK</name>
    <name type="ordered locus">BBta_4551</name>
</gene>
<protein>
    <recommendedName>
        <fullName evidence="1">NADH-quinone oxidoreductase subunit K</fullName>
        <ecNumber evidence="1">7.1.1.-</ecNumber>
    </recommendedName>
    <alternativeName>
        <fullName evidence="1">NADH dehydrogenase I subunit K</fullName>
    </alternativeName>
    <alternativeName>
        <fullName evidence="1">NDH-1 subunit K</fullName>
    </alternativeName>
</protein>
<accession>A5EK88</accession>
<name>NUOK_BRASB</name>
<proteinExistence type="inferred from homology"/>
<keyword id="KW-0997">Cell inner membrane</keyword>
<keyword id="KW-1003">Cell membrane</keyword>
<keyword id="KW-0472">Membrane</keyword>
<keyword id="KW-0520">NAD</keyword>
<keyword id="KW-0874">Quinone</keyword>
<keyword id="KW-1185">Reference proteome</keyword>
<keyword id="KW-1278">Translocase</keyword>
<keyword id="KW-0812">Transmembrane</keyword>
<keyword id="KW-1133">Transmembrane helix</keyword>
<keyword id="KW-0813">Transport</keyword>
<keyword id="KW-0830">Ubiquinone</keyword>
<comment type="function">
    <text evidence="1">NDH-1 shuttles electrons from NADH, via FMN and iron-sulfur (Fe-S) centers, to quinones in the respiratory chain. The immediate electron acceptor for the enzyme in this species is believed to be ubiquinone. Couples the redox reaction to proton translocation (for every two electrons transferred, four hydrogen ions are translocated across the cytoplasmic membrane), and thus conserves the redox energy in a proton gradient.</text>
</comment>
<comment type="catalytic activity">
    <reaction evidence="1">
        <text>a quinone + NADH + 5 H(+)(in) = a quinol + NAD(+) + 4 H(+)(out)</text>
        <dbReference type="Rhea" id="RHEA:57888"/>
        <dbReference type="ChEBI" id="CHEBI:15378"/>
        <dbReference type="ChEBI" id="CHEBI:24646"/>
        <dbReference type="ChEBI" id="CHEBI:57540"/>
        <dbReference type="ChEBI" id="CHEBI:57945"/>
        <dbReference type="ChEBI" id="CHEBI:132124"/>
    </reaction>
</comment>
<comment type="subunit">
    <text evidence="1">NDH-1 is composed of 14 different subunits. Subunits NuoA, H, J, K, L, M, N constitute the membrane sector of the complex.</text>
</comment>
<comment type="subcellular location">
    <subcellularLocation>
        <location evidence="1">Cell inner membrane</location>
        <topology evidence="1">Multi-pass membrane protein</topology>
    </subcellularLocation>
</comment>
<comment type="similarity">
    <text evidence="1">Belongs to the complex I subunit 4L family.</text>
</comment>
<organism>
    <name type="scientific">Bradyrhizobium sp. (strain BTAi1 / ATCC BAA-1182)</name>
    <dbReference type="NCBI Taxonomy" id="288000"/>
    <lineage>
        <taxon>Bacteria</taxon>
        <taxon>Pseudomonadati</taxon>
        <taxon>Pseudomonadota</taxon>
        <taxon>Alphaproteobacteria</taxon>
        <taxon>Hyphomicrobiales</taxon>
        <taxon>Nitrobacteraceae</taxon>
        <taxon>Bradyrhizobium</taxon>
    </lineage>
</organism>
<evidence type="ECO:0000255" key="1">
    <source>
        <dbReference type="HAMAP-Rule" id="MF_01456"/>
    </source>
</evidence>
<dbReference type="EC" id="7.1.1.-" evidence="1"/>
<dbReference type="EMBL" id="CP000494">
    <property type="protein sequence ID" value="ABQ36582.1"/>
    <property type="molecule type" value="Genomic_DNA"/>
</dbReference>
<dbReference type="RefSeq" id="WP_006611001.1">
    <property type="nucleotide sequence ID" value="NC_009485.1"/>
</dbReference>
<dbReference type="SMR" id="A5EK88"/>
<dbReference type="STRING" id="288000.BBta_4551"/>
<dbReference type="KEGG" id="bbt:BBta_4551"/>
<dbReference type="eggNOG" id="COG0713">
    <property type="taxonomic scope" value="Bacteria"/>
</dbReference>
<dbReference type="HOGENOM" id="CLU_144724_2_0_5"/>
<dbReference type="OrthoDB" id="9811124at2"/>
<dbReference type="Proteomes" id="UP000000246">
    <property type="component" value="Chromosome"/>
</dbReference>
<dbReference type="GO" id="GO:0030964">
    <property type="term" value="C:NADH dehydrogenase complex"/>
    <property type="evidence" value="ECO:0007669"/>
    <property type="project" value="TreeGrafter"/>
</dbReference>
<dbReference type="GO" id="GO:0005886">
    <property type="term" value="C:plasma membrane"/>
    <property type="evidence" value="ECO:0007669"/>
    <property type="project" value="UniProtKB-SubCell"/>
</dbReference>
<dbReference type="GO" id="GO:0050136">
    <property type="term" value="F:NADH:ubiquinone reductase (non-electrogenic) activity"/>
    <property type="evidence" value="ECO:0007669"/>
    <property type="project" value="UniProtKB-UniRule"/>
</dbReference>
<dbReference type="GO" id="GO:0048038">
    <property type="term" value="F:quinone binding"/>
    <property type="evidence" value="ECO:0007669"/>
    <property type="project" value="UniProtKB-KW"/>
</dbReference>
<dbReference type="GO" id="GO:0042773">
    <property type="term" value="P:ATP synthesis coupled electron transport"/>
    <property type="evidence" value="ECO:0007669"/>
    <property type="project" value="InterPro"/>
</dbReference>
<dbReference type="FunFam" id="1.10.287.3510:FF:000001">
    <property type="entry name" value="NADH-quinone oxidoreductase subunit K"/>
    <property type="match status" value="1"/>
</dbReference>
<dbReference type="Gene3D" id="1.10.287.3510">
    <property type="match status" value="1"/>
</dbReference>
<dbReference type="HAMAP" id="MF_01456">
    <property type="entry name" value="NDH1_NuoK"/>
    <property type="match status" value="1"/>
</dbReference>
<dbReference type="InterPro" id="IPR001133">
    <property type="entry name" value="NADH_UbQ_OxRdtase_chain4L/K"/>
</dbReference>
<dbReference type="InterPro" id="IPR039428">
    <property type="entry name" value="NUOK/Mnh_C1-like"/>
</dbReference>
<dbReference type="NCBIfam" id="NF004320">
    <property type="entry name" value="PRK05715.1-2"/>
    <property type="match status" value="1"/>
</dbReference>
<dbReference type="NCBIfam" id="NF004321">
    <property type="entry name" value="PRK05715.1-3"/>
    <property type="match status" value="1"/>
</dbReference>
<dbReference type="NCBIfam" id="NF004323">
    <property type="entry name" value="PRK05715.1-5"/>
    <property type="match status" value="1"/>
</dbReference>
<dbReference type="PANTHER" id="PTHR11434:SF21">
    <property type="entry name" value="NADH DEHYDROGENASE SUBUNIT 4L-RELATED"/>
    <property type="match status" value="1"/>
</dbReference>
<dbReference type="PANTHER" id="PTHR11434">
    <property type="entry name" value="NADH-UBIQUINONE OXIDOREDUCTASE SUBUNIT ND4L"/>
    <property type="match status" value="1"/>
</dbReference>
<dbReference type="Pfam" id="PF00420">
    <property type="entry name" value="Oxidored_q2"/>
    <property type="match status" value="1"/>
</dbReference>